<comment type="function">
    <text evidence="1">Part of the twin-arginine translocation (Tat) system that transports large folded proteins containing a characteristic twin-arginine motif in their signal peptide across membranes. TatA could form the protein-conducting channel of the Tat system.</text>
</comment>
<comment type="subunit">
    <text evidence="1">The Tat system comprises two distinct complexes: a TatABC complex, containing multiple copies of TatA, TatB and TatC subunits, and a separate TatA complex, containing only TatA subunits. Substrates initially bind to the TatABC complex, which probably triggers association of the separate TatA complex to form the active translocon.</text>
</comment>
<comment type="subcellular location">
    <subcellularLocation>
        <location evidence="1">Cell inner membrane</location>
        <topology evidence="1">Single-pass membrane protein</topology>
    </subcellularLocation>
</comment>
<comment type="similarity">
    <text evidence="1">Belongs to the TatA/E family.</text>
</comment>
<reference key="1">
    <citation type="submission" date="2008-04" db="EMBL/GenBank/DDBJ databases">
        <title>Complete sequence of chromosome of Methylobacterium populi BJ001.</title>
        <authorList>
            <consortium name="US DOE Joint Genome Institute"/>
            <person name="Copeland A."/>
            <person name="Lucas S."/>
            <person name="Lapidus A."/>
            <person name="Glavina del Rio T."/>
            <person name="Dalin E."/>
            <person name="Tice H."/>
            <person name="Bruce D."/>
            <person name="Goodwin L."/>
            <person name="Pitluck S."/>
            <person name="Chertkov O."/>
            <person name="Brettin T."/>
            <person name="Detter J.C."/>
            <person name="Han C."/>
            <person name="Kuske C.R."/>
            <person name="Schmutz J."/>
            <person name="Larimer F."/>
            <person name="Land M."/>
            <person name="Hauser L."/>
            <person name="Kyrpides N."/>
            <person name="Mikhailova N."/>
            <person name="Marx C."/>
            <person name="Richardson P."/>
        </authorList>
    </citation>
    <scope>NUCLEOTIDE SEQUENCE [LARGE SCALE GENOMIC DNA]</scope>
    <source>
        <strain>ATCC BAA-705 / NCIMB 13946 / BJ001</strain>
    </source>
</reference>
<accession>B1ZLT9</accession>
<dbReference type="EMBL" id="CP001029">
    <property type="protein sequence ID" value="ACB81739.1"/>
    <property type="molecule type" value="Genomic_DNA"/>
</dbReference>
<dbReference type="RefSeq" id="WP_012455455.1">
    <property type="nucleotide sequence ID" value="NC_010725.1"/>
</dbReference>
<dbReference type="SMR" id="B1ZLT9"/>
<dbReference type="STRING" id="441620.Mpop_3590"/>
<dbReference type="KEGG" id="mpo:Mpop_3590"/>
<dbReference type="eggNOG" id="COG1826">
    <property type="taxonomic scope" value="Bacteria"/>
</dbReference>
<dbReference type="HOGENOM" id="CLU_086034_5_0_5"/>
<dbReference type="OrthoDB" id="7161179at2"/>
<dbReference type="Proteomes" id="UP000007136">
    <property type="component" value="Chromosome"/>
</dbReference>
<dbReference type="GO" id="GO:0033281">
    <property type="term" value="C:TAT protein transport complex"/>
    <property type="evidence" value="ECO:0007669"/>
    <property type="project" value="UniProtKB-UniRule"/>
</dbReference>
<dbReference type="GO" id="GO:0008320">
    <property type="term" value="F:protein transmembrane transporter activity"/>
    <property type="evidence" value="ECO:0007669"/>
    <property type="project" value="UniProtKB-UniRule"/>
</dbReference>
<dbReference type="GO" id="GO:0043953">
    <property type="term" value="P:protein transport by the Tat complex"/>
    <property type="evidence" value="ECO:0007669"/>
    <property type="project" value="UniProtKB-UniRule"/>
</dbReference>
<dbReference type="Gene3D" id="1.20.5.3310">
    <property type="match status" value="1"/>
</dbReference>
<dbReference type="HAMAP" id="MF_00236">
    <property type="entry name" value="TatA_E"/>
    <property type="match status" value="1"/>
</dbReference>
<dbReference type="InterPro" id="IPR003369">
    <property type="entry name" value="TatA/B/E"/>
</dbReference>
<dbReference type="InterPro" id="IPR006312">
    <property type="entry name" value="TatA/E"/>
</dbReference>
<dbReference type="NCBIfam" id="NF001940">
    <property type="entry name" value="PRK00720.1"/>
    <property type="match status" value="1"/>
</dbReference>
<dbReference type="NCBIfam" id="TIGR01411">
    <property type="entry name" value="tatAE"/>
    <property type="match status" value="1"/>
</dbReference>
<dbReference type="PANTHER" id="PTHR42982">
    <property type="entry name" value="SEC-INDEPENDENT PROTEIN TRANSLOCASE PROTEIN TATA"/>
    <property type="match status" value="1"/>
</dbReference>
<dbReference type="PANTHER" id="PTHR42982:SF1">
    <property type="entry name" value="SEC-INDEPENDENT PROTEIN TRANSLOCASE PROTEIN TATA"/>
    <property type="match status" value="1"/>
</dbReference>
<dbReference type="Pfam" id="PF02416">
    <property type="entry name" value="TatA_B_E"/>
    <property type="match status" value="1"/>
</dbReference>
<proteinExistence type="inferred from homology"/>
<evidence type="ECO:0000255" key="1">
    <source>
        <dbReference type="HAMAP-Rule" id="MF_00236"/>
    </source>
</evidence>
<evidence type="ECO:0000256" key="2">
    <source>
        <dbReference type="SAM" id="MobiDB-lite"/>
    </source>
</evidence>
<gene>
    <name evidence="1" type="primary">tatA</name>
    <name type="ordered locus">Mpop_3590</name>
</gene>
<name>TATA_METPB</name>
<protein>
    <recommendedName>
        <fullName evidence="1">Sec-independent protein translocase protein TatA</fullName>
    </recommendedName>
</protein>
<keyword id="KW-0997">Cell inner membrane</keyword>
<keyword id="KW-1003">Cell membrane</keyword>
<keyword id="KW-0472">Membrane</keyword>
<keyword id="KW-0653">Protein transport</keyword>
<keyword id="KW-0811">Translocation</keyword>
<keyword id="KW-0812">Transmembrane</keyword>
<keyword id="KW-1133">Transmembrane helix</keyword>
<keyword id="KW-0813">Transport</keyword>
<organism>
    <name type="scientific">Methylorubrum populi (strain ATCC BAA-705 / NCIMB 13946 / BJ001)</name>
    <name type="common">Methylobacterium populi</name>
    <dbReference type="NCBI Taxonomy" id="441620"/>
    <lineage>
        <taxon>Bacteria</taxon>
        <taxon>Pseudomonadati</taxon>
        <taxon>Pseudomonadota</taxon>
        <taxon>Alphaproteobacteria</taxon>
        <taxon>Hyphomicrobiales</taxon>
        <taxon>Methylobacteriaceae</taxon>
        <taxon>Methylorubrum</taxon>
    </lineage>
</organism>
<sequence length="91" mass="9582">MGSMSVWHWVIVAVVVMLLFGRGKVSELMGDVAKGIKAFKKGMADDETQPTNTTSVPPVGPNDPVRTLPHQGAPGTAPQQTHVPAGDHKAV</sequence>
<feature type="chain" id="PRO_1000197880" description="Sec-independent protein translocase protein TatA">
    <location>
        <begin position="1"/>
        <end position="91"/>
    </location>
</feature>
<feature type="transmembrane region" description="Helical" evidence="1">
    <location>
        <begin position="1"/>
        <end position="21"/>
    </location>
</feature>
<feature type="region of interest" description="Disordered" evidence="2">
    <location>
        <begin position="42"/>
        <end position="91"/>
    </location>
</feature>